<proteinExistence type="inferred from homology"/>
<protein>
    <recommendedName>
        <fullName evidence="1">Adenine phosphoribosyltransferase</fullName>
        <shortName evidence="1">APRT</shortName>
        <ecNumber evidence="1">2.4.2.7</ecNumber>
    </recommendedName>
</protein>
<dbReference type="EC" id="2.4.2.7" evidence="1"/>
<dbReference type="EMBL" id="BX569691">
    <property type="protein sequence ID" value="CAE07329.1"/>
    <property type="molecule type" value="Genomic_DNA"/>
</dbReference>
<dbReference type="RefSeq" id="WP_011127679.1">
    <property type="nucleotide sequence ID" value="NC_005070.1"/>
</dbReference>
<dbReference type="SMR" id="Q7TTW1"/>
<dbReference type="STRING" id="84588.SYNW0814"/>
<dbReference type="KEGG" id="syw:SYNW0814"/>
<dbReference type="eggNOG" id="COG0503">
    <property type="taxonomic scope" value="Bacteria"/>
</dbReference>
<dbReference type="HOGENOM" id="CLU_063339_3_3_3"/>
<dbReference type="UniPathway" id="UPA00588">
    <property type="reaction ID" value="UER00646"/>
</dbReference>
<dbReference type="Proteomes" id="UP000001422">
    <property type="component" value="Chromosome"/>
</dbReference>
<dbReference type="GO" id="GO:0005737">
    <property type="term" value="C:cytoplasm"/>
    <property type="evidence" value="ECO:0007669"/>
    <property type="project" value="UniProtKB-SubCell"/>
</dbReference>
<dbReference type="GO" id="GO:0002055">
    <property type="term" value="F:adenine binding"/>
    <property type="evidence" value="ECO:0007669"/>
    <property type="project" value="TreeGrafter"/>
</dbReference>
<dbReference type="GO" id="GO:0003999">
    <property type="term" value="F:adenine phosphoribosyltransferase activity"/>
    <property type="evidence" value="ECO:0007669"/>
    <property type="project" value="UniProtKB-UniRule"/>
</dbReference>
<dbReference type="GO" id="GO:0016208">
    <property type="term" value="F:AMP binding"/>
    <property type="evidence" value="ECO:0007669"/>
    <property type="project" value="TreeGrafter"/>
</dbReference>
<dbReference type="GO" id="GO:0006168">
    <property type="term" value="P:adenine salvage"/>
    <property type="evidence" value="ECO:0007669"/>
    <property type="project" value="InterPro"/>
</dbReference>
<dbReference type="GO" id="GO:0044209">
    <property type="term" value="P:AMP salvage"/>
    <property type="evidence" value="ECO:0007669"/>
    <property type="project" value="UniProtKB-UniRule"/>
</dbReference>
<dbReference type="GO" id="GO:0006166">
    <property type="term" value="P:purine ribonucleoside salvage"/>
    <property type="evidence" value="ECO:0007669"/>
    <property type="project" value="UniProtKB-KW"/>
</dbReference>
<dbReference type="CDD" id="cd06223">
    <property type="entry name" value="PRTases_typeI"/>
    <property type="match status" value="1"/>
</dbReference>
<dbReference type="FunFam" id="3.40.50.2020:FF:000021">
    <property type="entry name" value="Adenine phosphoribosyltransferase"/>
    <property type="match status" value="1"/>
</dbReference>
<dbReference type="Gene3D" id="3.40.50.2020">
    <property type="match status" value="1"/>
</dbReference>
<dbReference type="HAMAP" id="MF_00004">
    <property type="entry name" value="Aden_phosphoribosyltr"/>
    <property type="match status" value="1"/>
</dbReference>
<dbReference type="InterPro" id="IPR005764">
    <property type="entry name" value="Ade_phspho_trans"/>
</dbReference>
<dbReference type="InterPro" id="IPR000836">
    <property type="entry name" value="PRibTrfase_dom"/>
</dbReference>
<dbReference type="InterPro" id="IPR029057">
    <property type="entry name" value="PRTase-like"/>
</dbReference>
<dbReference type="InterPro" id="IPR050054">
    <property type="entry name" value="UPRTase/APRTase"/>
</dbReference>
<dbReference type="NCBIfam" id="TIGR01090">
    <property type="entry name" value="apt"/>
    <property type="match status" value="1"/>
</dbReference>
<dbReference type="NCBIfam" id="NF002634">
    <property type="entry name" value="PRK02304.1-3"/>
    <property type="match status" value="1"/>
</dbReference>
<dbReference type="NCBIfam" id="NF002636">
    <property type="entry name" value="PRK02304.1-5"/>
    <property type="match status" value="1"/>
</dbReference>
<dbReference type="PANTHER" id="PTHR32315">
    <property type="entry name" value="ADENINE PHOSPHORIBOSYLTRANSFERASE"/>
    <property type="match status" value="1"/>
</dbReference>
<dbReference type="PANTHER" id="PTHR32315:SF3">
    <property type="entry name" value="ADENINE PHOSPHORIBOSYLTRANSFERASE"/>
    <property type="match status" value="1"/>
</dbReference>
<dbReference type="Pfam" id="PF00156">
    <property type="entry name" value="Pribosyltran"/>
    <property type="match status" value="1"/>
</dbReference>
<dbReference type="SUPFAM" id="SSF53271">
    <property type="entry name" value="PRTase-like"/>
    <property type="match status" value="1"/>
</dbReference>
<dbReference type="PROSITE" id="PS00103">
    <property type="entry name" value="PUR_PYR_PR_TRANSFER"/>
    <property type="match status" value="1"/>
</dbReference>
<evidence type="ECO:0000255" key="1">
    <source>
        <dbReference type="HAMAP-Rule" id="MF_00004"/>
    </source>
</evidence>
<keyword id="KW-0963">Cytoplasm</keyword>
<keyword id="KW-0328">Glycosyltransferase</keyword>
<keyword id="KW-0660">Purine salvage</keyword>
<keyword id="KW-0808">Transferase</keyword>
<comment type="function">
    <text evidence="1">Catalyzes a salvage reaction resulting in the formation of AMP, that is energically less costly than de novo synthesis.</text>
</comment>
<comment type="catalytic activity">
    <reaction evidence="1">
        <text>AMP + diphosphate = 5-phospho-alpha-D-ribose 1-diphosphate + adenine</text>
        <dbReference type="Rhea" id="RHEA:16609"/>
        <dbReference type="ChEBI" id="CHEBI:16708"/>
        <dbReference type="ChEBI" id="CHEBI:33019"/>
        <dbReference type="ChEBI" id="CHEBI:58017"/>
        <dbReference type="ChEBI" id="CHEBI:456215"/>
        <dbReference type="EC" id="2.4.2.7"/>
    </reaction>
</comment>
<comment type="pathway">
    <text evidence="1">Purine metabolism; AMP biosynthesis via salvage pathway; AMP from adenine: step 1/1.</text>
</comment>
<comment type="subunit">
    <text evidence="1">Homodimer.</text>
</comment>
<comment type="subcellular location">
    <subcellularLocation>
        <location evidence="1">Cytoplasm</location>
    </subcellularLocation>
</comment>
<comment type="similarity">
    <text evidence="1">Belongs to the purine/pyrimidine phosphoribosyltransferase family.</text>
</comment>
<accession>Q7TTW1</accession>
<reference key="1">
    <citation type="journal article" date="2003" name="Nature">
        <title>The genome of a motile marine Synechococcus.</title>
        <authorList>
            <person name="Palenik B."/>
            <person name="Brahamsha B."/>
            <person name="Larimer F.W."/>
            <person name="Land M.L."/>
            <person name="Hauser L."/>
            <person name="Chain P."/>
            <person name="Lamerdin J.E."/>
            <person name="Regala W."/>
            <person name="Allen E.E."/>
            <person name="McCarren J."/>
            <person name="Paulsen I.T."/>
            <person name="Dufresne A."/>
            <person name="Partensky F."/>
            <person name="Webb E.A."/>
            <person name="Waterbury J."/>
        </authorList>
    </citation>
    <scope>NUCLEOTIDE SEQUENCE [LARGE SCALE GENOMIC DNA]</scope>
    <source>
        <strain>WH8102</strain>
    </source>
</reference>
<name>APT_PARMW</name>
<organism>
    <name type="scientific">Parasynechococcus marenigrum (strain WH8102)</name>
    <dbReference type="NCBI Taxonomy" id="84588"/>
    <lineage>
        <taxon>Bacteria</taxon>
        <taxon>Bacillati</taxon>
        <taxon>Cyanobacteriota</taxon>
        <taxon>Cyanophyceae</taxon>
        <taxon>Synechococcales</taxon>
        <taxon>Prochlorococcaceae</taxon>
        <taxon>Parasynechococcus</taxon>
        <taxon>Parasynechococcus marenigrum</taxon>
    </lineage>
</organism>
<sequence length="172" mass="18264">MDLQTYIRSIPDFPKPGILFRDINPLLRNPAAMVEVMRRLGAICDAVQPDLIVGIESRGFIVGTPLALQRSLGFVPVRKPGKLPGAVIGVDYALEYGTDRLEIQSDALTGNPRVLVVDDLLATGGTAAATGSLVRAAGGELVGFAFVIELEPLGGRSALPDEVLAESLIRYP</sequence>
<feature type="chain" id="PRO_0000149476" description="Adenine phosphoribosyltransferase">
    <location>
        <begin position="1"/>
        <end position="172"/>
    </location>
</feature>
<gene>
    <name evidence="1" type="primary">apt</name>
    <name type="ordered locus">SYNW0814</name>
</gene>